<sequence>MSPAPDAAPAPASISLFDLSADAPVFQGLSLVSHAPGEALARAPRTSCSGSGERESPERKLLQGPMDISEKLFCSTCDQTFQNHQEQREHYKLDWHRFNLKQRLKDKPLLSALDFEKQSSTGDLSSISGSEDSDSASEEDLQTLDRERATFEKLSRPPGFYPHRVLFQNAQGQFLYAYRCVLGPHQDPPEEAELLLQNLQSRGPRDCVVLMAAAGHFAGAIFQGREVVTHKTFHRYTVRAKRGTAQGLRDARGGPSHSAGANLRRYNEATLYKDVRDLLAGPSWAKALEEAGTILLRAPRSGRSLFFGGKGAPLQRGDPRLWDIPLATRRPTFQELQRVLHKLTTLHVYEEDPREAVRLHSPQTHWKTVREERKKPTEEEIRKICRDEKEALGQNEESPKQGSGSEGEDGFQVELELVELTVGTLDLCESEVLPKRRRRKRNKKEKSRDQEAGAHRTLLQQTQEEEPSTQSSQAVAAPLGPLLDEAKAPGQPELWNALLAACRAGDVGVLKLQLAPSPADPRVLSLLSAPLGSGGFTLLHAAAAAGRGSVVRLLLEAGADPTVQDSRARPPYTVAADKSTRNEFRRFMEKNPDAYDYNKAQVPGPLTPEMEARQATRKREQKAARRQREEQQQRQQEQEEREREEQRRFAALSDREKRALAAERRLAAQLGAPTSPIPDSAIVNTRRCWSCGASLQGLTPFHYLDFSFCSTRCLQDHRRQAGRPSS</sequence>
<proteinExistence type="evidence at protein level"/>
<name>ANKZ1_HUMAN</name>
<evidence type="ECO:0000250" key="1">
    <source>
        <dbReference type="UniProtKB" id="Q04311"/>
    </source>
</evidence>
<evidence type="ECO:0000255" key="2"/>
<evidence type="ECO:0000255" key="3">
    <source>
        <dbReference type="PROSITE-ProRule" id="PRU01389"/>
    </source>
</evidence>
<evidence type="ECO:0000256" key="4">
    <source>
        <dbReference type="SAM" id="MobiDB-lite"/>
    </source>
</evidence>
<evidence type="ECO:0000269" key="5">
    <source>
    </source>
</evidence>
<evidence type="ECO:0000269" key="6">
    <source>
    </source>
</evidence>
<evidence type="ECO:0000269" key="7">
    <source>
    </source>
</evidence>
<evidence type="ECO:0000269" key="8">
    <source>
    </source>
</evidence>
<evidence type="ECO:0000269" key="9">
    <source>
    </source>
</evidence>
<evidence type="ECO:0000269" key="10">
    <source>
    </source>
</evidence>
<evidence type="ECO:0000303" key="11">
    <source>
    </source>
</evidence>
<evidence type="ECO:0000305" key="12"/>
<evidence type="ECO:0000305" key="13">
    <source>
    </source>
</evidence>
<evidence type="ECO:0000305" key="14">
    <source>
    </source>
</evidence>
<evidence type="ECO:0000312" key="15">
    <source>
        <dbReference type="HGNC" id="HGNC:25527"/>
    </source>
</evidence>
<evidence type="ECO:0007744" key="16">
    <source>
    </source>
</evidence>
<evidence type="ECO:0007744" key="17">
    <source>
    </source>
</evidence>
<evidence type="ECO:0007744" key="18">
    <source>
    </source>
</evidence>
<evidence type="ECO:0007744" key="19">
    <source>
    </source>
</evidence>
<feature type="chain" id="PRO_0000247278" description="tRNA endonuclease ANKZF1">
    <location>
        <begin position="1"/>
        <end position="726"/>
    </location>
</feature>
<feature type="domain" description="VLRF1" evidence="3">
    <location>
        <begin position="203"/>
        <end position="346"/>
    </location>
</feature>
<feature type="repeat" description="ANK 1">
    <location>
        <begin position="493"/>
        <end position="526"/>
    </location>
</feature>
<feature type="repeat" description="ANK 2">
    <location>
        <begin position="534"/>
        <end position="563"/>
    </location>
</feature>
<feature type="zinc finger region" description="C2H2-type">
    <location>
        <begin position="72"/>
        <end position="96"/>
    </location>
</feature>
<feature type="region of interest" description="Disordered" evidence="4">
    <location>
        <begin position="40"/>
        <end position="61"/>
    </location>
</feature>
<feature type="region of interest" description="Disordered" evidence="4">
    <location>
        <begin position="120"/>
        <end position="141"/>
    </location>
</feature>
<feature type="region of interest" description="Disordered" evidence="4">
    <location>
        <begin position="387"/>
        <end position="409"/>
    </location>
</feature>
<feature type="region of interest" description="Disordered" evidence="4">
    <location>
        <begin position="436"/>
        <end position="474"/>
    </location>
</feature>
<feature type="region of interest" description="Disordered" evidence="4">
    <location>
        <begin position="588"/>
        <end position="656"/>
    </location>
</feature>
<feature type="region of interest" description="VCP/p97-interacting motif (VIM)" evidence="5">
    <location>
        <begin position="654"/>
        <end position="666"/>
    </location>
</feature>
<feature type="coiled-coil region" evidence="2">
    <location>
        <begin position="609"/>
        <end position="659"/>
    </location>
</feature>
<feature type="compositionally biased region" description="Basic and acidic residues" evidence="4">
    <location>
        <begin position="52"/>
        <end position="61"/>
    </location>
</feature>
<feature type="compositionally biased region" description="Low complexity" evidence="4">
    <location>
        <begin position="120"/>
        <end position="130"/>
    </location>
</feature>
<feature type="compositionally biased region" description="Acidic residues" evidence="4">
    <location>
        <begin position="131"/>
        <end position="141"/>
    </location>
</feature>
<feature type="compositionally biased region" description="Basic residues" evidence="4">
    <location>
        <begin position="436"/>
        <end position="445"/>
    </location>
</feature>
<feature type="compositionally biased region" description="Low complexity" evidence="4">
    <location>
        <begin position="457"/>
        <end position="473"/>
    </location>
</feature>
<feature type="compositionally biased region" description="Basic and acidic residues" evidence="4">
    <location>
        <begin position="610"/>
        <end position="656"/>
    </location>
</feature>
<feature type="active site" evidence="3 13 14">
    <location>
        <position position="246"/>
    </location>
</feature>
<feature type="modified residue" description="Phosphoserine" evidence="17">
    <location>
        <position position="258"/>
    </location>
</feature>
<feature type="modified residue" description="Phosphoserine" evidence="19">
    <location>
        <position position="361"/>
    </location>
</feature>
<feature type="modified residue" description="Phosphoserine" evidence="17 18">
    <location>
        <position position="398"/>
    </location>
</feature>
<feature type="modified residue" description="Phosphoserine" evidence="17 19">
    <location>
        <position position="533"/>
    </location>
</feature>
<feature type="modified residue" description="Phosphothreonine" evidence="17 19">
    <location>
        <position position="607"/>
    </location>
</feature>
<feature type="modified residue" description="Phosphoserine" evidence="16 19">
    <location>
        <position position="675"/>
    </location>
</feature>
<feature type="modified residue" description="Phosphoserine" evidence="19">
    <location>
        <position position="680"/>
    </location>
</feature>
<feature type="sequence variant" id="VAR_079136" description="Found in a patient with infantile-onset inflammatory bowel disease; uncertain significance." evidence="6">
    <location>
        <begin position="32"/>
        <end position="87"/>
    </location>
</feature>
<feature type="sequence variant" id="VAR_079137" description="Found in a patient with infantile-onset inflammatory bowel disease; uncertain significance; decreased function in cellular response to hydrogen peroxide; does not affect protein abundance; does not affect interaction with VCP; dbSNP:rs149382949." evidence="6">
    <original>E</original>
    <variation>K</variation>
    <location>
        <position position="152"/>
    </location>
</feature>
<feature type="sequence variant" id="VAR_048269" description="In dbSNP:rs2293076.">
    <original>R</original>
    <variation>W</variation>
    <location>
        <position position="569"/>
    </location>
</feature>
<feature type="sequence variant" id="VAR_079138" description="Found in a patient with infantile-onset inflammatory bowel disease; uncertain significance; decreased function in cellular response to hydrogen peroxide; decreased protein abundance; does not affect interaction with VCP; dbSNP:rs189875478." evidence="6">
    <original>R</original>
    <variation>Q</variation>
    <location>
        <position position="585"/>
    </location>
</feature>
<feature type="sequence variant" id="VAR_079139" evidence="6">
    <original>Q</original>
    <variation>P</variation>
    <location>
        <position position="638"/>
    </location>
</feature>
<feature type="sequence variant" id="VAR_048270" description="In dbSNP:rs2293079.">
    <original>P</original>
    <variation>L</variation>
    <location>
        <position position="676"/>
    </location>
</feature>
<feature type="mutagenesis site" description="Abolished ability to cleave polypeptidyl-tRNAs." evidence="7 8">
    <original>Q</original>
    <variation>L</variation>
    <location>
        <position position="246"/>
    </location>
</feature>
<feature type="mutagenesis site" description="Abolishes interaction with VCP." evidence="5">
    <original>AA</original>
    <variation>LL</variation>
    <location>
        <begin position="661"/>
        <end position="662"/>
    </location>
</feature>
<gene>
    <name evidence="11 15" type="primary">ANKZF1</name>
    <name evidence="11" type="synonym">ZNF744</name>
</gene>
<keyword id="KW-0040">ANK repeat</keyword>
<keyword id="KW-0175">Coiled coil</keyword>
<keyword id="KW-0963">Cytoplasm</keyword>
<keyword id="KW-0255">Endonuclease</keyword>
<keyword id="KW-0378">Hydrolase</keyword>
<keyword id="KW-0479">Metal-binding</keyword>
<keyword id="KW-0540">Nuclease</keyword>
<keyword id="KW-0597">Phosphoprotein</keyword>
<keyword id="KW-1267">Proteomics identification</keyword>
<keyword id="KW-1185">Reference proteome</keyword>
<keyword id="KW-0677">Repeat</keyword>
<keyword id="KW-0862">Zinc</keyword>
<keyword id="KW-0863">Zinc-finger</keyword>
<protein>
    <recommendedName>
        <fullName evidence="12">tRNA endonuclease ANKZF1</fullName>
        <ecNumber evidence="8 9">3.1.-.-</ecNumber>
    </recommendedName>
    <alternativeName>
        <fullName evidence="12">Ankyrin repeat and zinc finger domain-containing protein 1</fullName>
    </alternativeName>
    <alternativeName>
        <fullName evidence="12">Zinc finger protein 744</fullName>
    </alternativeName>
</protein>
<organism>
    <name type="scientific">Homo sapiens</name>
    <name type="common">Human</name>
    <dbReference type="NCBI Taxonomy" id="9606"/>
    <lineage>
        <taxon>Eukaryota</taxon>
        <taxon>Metazoa</taxon>
        <taxon>Chordata</taxon>
        <taxon>Craniata</taxon>
        <taxon>Vertebrata</taxon>
        <taxon>Euteleostomi</taxon>
        <taxon>Mammalia</taxon>
        <taxon>Eutheria</taxon>
        <taxon>Euarchontoglires</taxon>
        <taxon>Primates</taxon>
        <taxon>Haplorrhini</taxon>
        <taxon>Catarrhini</taxon>
        <taxon>Hominidae</taxon>
        <taxon>Homo</taxon>
    </lineage>
</organism>
<dbReference type="EC" id="3.1.-.-" evidence="8 9"/>
<dbReference type="EMBL" id="DQ412564">
    <property type="protein sequence ID" value="ABD65410.1"/>
    <property type="status" value="ALT_FRAME"/>
    <property type="molecule type" value="mRNA"/>
</dbReference>
<dbReference type="EMBL" id="AK001277">
    <property type="protein sequence ID" value="BAA91596.1"/>
    <property type="status" value="ALT_FRAME"/>
    <property type="molecule type" value="mRNA"/>
</dbReference>
<dbReference type="EMBL" id="AK023206">
    <property type="protein sequence ID" value="BAB14462.1"/>
    <property type="molecule type" value="mRNA"/>
</dbReference>
<dbReference type="EMBL" id="BC000238">
    <property type="protein sequence ID" value="AAH00238.1"/>
    <property type="molecule type" value="mRNA"/>
</dbReference>
<dbReference type="EMBL" id="BC008948">
    <property type="protein sequence ID" value="AAH08948.1"/>
    <property type="molecule type" value="mRNA"/>
</dbReference>
<dbReference type="CCDS" id="CCDS42821.1"/>
<dbReference type="RefSeq" id="NP_001035869.1">
    <property type="nucleotide sequence ID" value="NM_001042410.2"/>
</dbReference>
<dbReference type="RefSeq" id="NP_060559.2">
    <property type="nucleotide sequence ID" value="NM_018089.3"/>
</dbReference>
<dbReference type="SMR" id="Q9H8Y5"/>
<dbReference type="BioGRID" id="120443">
    <property type="interactions" value="47"/>
</dbReference>
<dbReference type="FunCoup" id="Q9H8Y5">
    <property type="interactions" value="687"/>
</dbReference>
<dbReference type="IntAct" id="Q9H8Y5">
    <property type="interactions" value="39"/>
</dbReference>
<dbReference type="MINT" id="Q9H8Y5"/>
<dbReference type="STRING" id="9606.ENSP00000321617"/>
<dbReference type="GlyGen" id="Q9H8Y5">
    <property type="glycosylation" value="1 site, 1 O-linked glycan (1 site)"/>
</dbReference>
<dbReference type="iPTMnet" id="Q9H8Y5"/>
<dbReference type="MetOSite" id="Q9H8Y5"/>
<dbReference type="PhosphoSitePlus" id="Q9H8Y5"/>
<dbReference type="SwissPalm" id="Q9H8Y5"/>
<dbReference type="BioMuta" id="ANKZF1"/>
<dbReference type="DMDM" id="74761542"/>
<dbReference type="jPOST" id="Q9H8Y5"/>
<dbReference type="MassIVE" id="Q9H8Y5"/>
<dbReference type="PaxDb" id="9606-ENSP00000321617"/>
<dbReference type="PeptideAtlas" id="Q9H8Y5"/>
<dbReference type="ProteomicsDB" id="81256"/>
<dbReference type="Pumba" id="Q9H8Y5"/>
<dbReference type="ABCD" id="Q9H8Y5">
    <property type="antibodies" value="5 sequenced antibodies"/>
</dbReference>
<dbReference type="Antibodypedia" id="34312">
    <property type="antibodies" value="133 antibodies from 26 providers"/>
</dbReference>
<dbReference type="DNASU" id="55139"/>
<dbReference type="Ensembl" id="ENST00000323348.10">
    <property type="protein sequence ID" value="ENSP00000321617.5"/>
    <property type="gene ID" value="ENSG00000163516.14"/>
</dbReference>
<dbReference type="Ensembl" id="ENST00000410034.7">
    <property type="protein sequence ID" value="ENSP00000386337.3"/>
    <property type="gene ID" value="ENSG00000163516.14"/>
</dbReference>
<dbReference type="GeneID" id="55139"/>
<dbReference type="KEGG" id="hsa:55139"/>
<dbReference type="MANE-Select" id="ENST00000323348.10">
    <property type="protein sequence ID" value="ENSP00000321617.5"/>
    <property type="RefSeq nucleotide sequence ID" value="NM_018089.3"/>
    <property type="RefSeq protein sequence ID" value="NP_060559.2"/>
</dbReference>
<dbReference type="UCSC" id="uc002vkg.3">
    <property type="organism name" value="human"/>
</dbReference>
<dbReference type="AGR" id="HGNC:25527"/>
<dbReference type="CTD" id="55139"/>
<dbReference type="DisGeNET" id="55139"/>
<dbReference type="GeneCards" id="ANKZF1"/>
<dbReference type="HGNC" id="HGNC:25527">
    <property type="gene designation" value="ANKZF1"/>
</dbReference>
<dbReference type="HPA" id="ENSG00000163516">
    <property type="expression patterns" value="Low tissue specificity"/>
</dbReference>
<dbReference type="MalaCards" id="ANKZF1"/>
<dbReference type="MIM" id="617541">
    <property type="type" value="gene"/>
</dbReference>
<dbReference type="neXtProt" id="NX_Q9H8Y5"/>
<dbReference type="OpenTargets" id="ENSG00000163516"/>
<dbReference type="PharmGKB" id="PA143485305"/>
<dbReference type="VEuPathDB" id="HostDB:ENSG00000163516"/>
<dbReference type="eggNOG" id="KOG2505">
    <property type="taxonomic scope" value="Eukaryota"/>
</dbReference>
<dbReference type="GeneTree" id="ENSGT00390000005911"/>
<dbReference type="InParanoid" id="Q9H8Y5"/>
<dbReference type="OMA" id="GPHIFMC"/>
<dbReference type="OrthoDB" id="429841at2759"/>
<dbReference type="PAN-GO" id="Q9H8Y5">
    <property type="GO annotations" value="1 GO annotation based on evolutionary models"/>
</dbReference>
<dbReference type="PhylomeDB" id="Q9H8Y5"/>
<dbReference type="TreeFam" id="TF313431"/>
<dbReference type="BRENDA" id="3.1.1.29">
    <property type="organism ID" value="2681"/>
</dbReference>
<dbReference type="PathwayCommons" id="Q9H8Y5"/>
<dbReference type="SignaLink" id="Q9H8Y5"/>
<dbReference type="BioGRID-ORCS" id="55139">
    <property type="hits" value="13 hits in 1160 CRISPR screens"/>
</dbReference>
<dbReference type="ChiTaRS" id="ANKZF1">
    <property type="organism name" value="human"/>
</dbReference>
<dbReference type="GeneWiki" id="ANKZF1"/>
<dbReference type="GenomeRNAi" id="55139"/>
<dbReference type="Pharos" id="Q9H8Y5">
    <property type="development level" value="Tbio"/>
</dbReference>
<dbReference type="PRO" id="PR:Q9H8Y5"/>
<dbReference type="Proteomes" id="UP000005640">
    <property type="component" value="Chromosome 2"/>
</dbReference>
<dbReference type="RNAct" id="Q9H8Y5">
    <property type="molecule type" value="protein"/>
</dbReference>
<dbReference type="Bgee" id="ENSG00000163516">
    <property type="expression patterns" value="Expressed in right uterine tube and 136 other cell types or tissues"/>
</dbReference>
<dbReference type="ExpressionAtlas" id="Q9H8Y5">
    <property type="expression patterns" value="baseline and differential"/>
</dbReference>
<dbReference type="GO" id="GO:0005737">
    <property type="term" value="C:cytoplasm"/>
    <property type="evidence" value="ECO:0000314"/>
    <property type="project" value="UniProtKB"/>
</dbReference>
<dbReference type="GO" id="GO:0016020">
    <property type="term" value="C:membrane"/>
    <property type="evidence" value="ECO:0007005"/>
    <property type="project" value="UniProtKB"/>
</dbReference>
<dbReference type="GO" id="GO:0140101">
    <property type="term" value="F:catalytic activity, acting on a tRNA"/>
    <property type="evidence" value="ECO:0000314"/>
    <property type="project" value="UniProtKB"/>
</dbReference>
<dbReference type="GO" id="GO:0004521">
    <property type="term" value="F:RNA endonuclease activity"/>
    <property type="evidence" value="ECO:0000314"/>
    <property type="project" value="UniProtKB"/>
</dbReference>
<dbReference type="GO" id="GO:0008270">
    <property type="term" value="F:zinc ion binding"/>
    <property type="evidence" value="ECO:0007669"/>
    <property type="project" value="UniProtKB-KW"/>
</dbReference>
<dbReference type="GO" id="GO:0070301">
    <property type="term" value="P:cellular response to hydrogen peroxide"/>
    <property type="evidence" value="ECO:0000315"/>
    <property type="project" value="UniProtKB"/>
</dbReference>
<dbReference type="GO" id="GO:0036503">
    <property type="term" value="P:ERAD pathway"/>
    <property type="evidence" value="ECO:0000318"/>
    <property type="project" value="GO_Central"/>
</dbReference>
<dbReference type="GO" id="GO:0006515">
    <property type="term" value="P:protein quality control for misfolded or incompletely synthesized proteins"/>
    <property type="evidence" value="ECO:0000314"/>
    <property type="project" value="UniProtKB"/>
</dbReference>
<dbReference type="GO" id="GO:0072344">
    <property type="term" value="P:rescue of stalled ribosome"/>
    <property type="evidence" value="ECO:0000314"/>
    <property type="project" value="UniProtKB"/>
</dbReference>
<dbReference type="FunFam" id="1.25.40.20:FF:000180">
    <property type="entry name" value="Ankyrin repeat and zinc finger domain containing 1"/>
    <property type="match status" value="1"/>
</dbReference>
<dbReference type="Gene3D" id="1.25.40.20">
    <property type="entry name" value="Ankyrin repeat-containing domain"/>
    <property type="match status" value="1"/>
</dbReference>
<dbReference type="InterPro" id="IPR002110">
    <property type="entry name" value="Ankyrin_rpt"/>
</dbReference>
<dbReference type="InterPro" id="IPR036770">
    <property type="entry name" value="Ankyrin_rpt-contain_sf"/>
</dbReference>
<dbReference type="InterPro" id="IPR047139">
    <property type="entry name" value="ANKZ1/VMS1"/>
</dbReference>
<dbReference type="InterPro" id="IPR041540">
    <property type="entry name" value="VATC"/>
</dbReference>
<dbReference type="InterPro" id="IPR041175">
    <property type="entry name" value="VLRF1/Vms1"/>
</dbReference>
<dbReference type="InterPro" id="IPR013087">
    <property type="entry name" value="Znf_C2H2_type"/>
</dbReference>
<dbReference type="PANTHER" id="PTHR16036">
    <property type="entry name" value="ANKYRIN REPEAT AND ZINC FINGER DOMAIN-CONTAINING PROTEIN 1"/>
    <property type="match status" value="1"/>
</dbReference>
<dbReference type="PANTHER" id="PTHR16036:SF2">
    <property type="entry name" value="TRNA ENDONUCLEASE ANKZF1"/>
    <property type="match status" value="1"/>
</dbReference>
<dbReference type="Pfam" id="PF00023">
    <property type="entry name" value="Ank"/>
    <property type="match status" value="1"/>
</dbReference>
<dbReference type="Pfam" id="PF18826">
    <property type="entry name" value="bVLRF1"/>
    <property type="match status" value="1"/>
</dbReference>
<dbReference type="Pfam" id="PF18716">
    <property type="entry name" value="VATC"/>
    <property type="match status" value="1"/>
</dbReference>
<dbReference type="SMART" id="SM00248">
    <property type="entry name" value="ANK"/>
    <property type="match status" value="2"/>
</dbReference>
<dbReference type="SUPFAM" id="SSF48403">
    <property type="entry name" value="Ankyrin repeat"/>
    <property type="match status" value="1"/>
</dbReference>
<dbReference type="PROSITE" id="PS50297">
    <property type="entry name" value="ANK_REP_REGION"/>
    <property type="match status" value="1"/>
</dbReference>
<dbReference type="PROSITE" id="PS50088">
    <property type="entry name" value="ANK_REPEAT"/>
    <property type="match status" value="1"/>
</dbReference>
<dbReference type="PROSITE" id="PS52044">
    <property type="entry name" value="VLRF1"/>
    <property type="match status" value="1"/>
</dbReference>
<dbReference type="PROSITE" id="PS00028">
    <property type="entry name" value="ZINC_FINGER_C2H2_1"/>
    <property type="match status" value="1"/>
</dbReference>
<accession>Q9H8Y5</accession>
<accession>Q9NVZ4</accession>
<comment type="function">
    <text evidence="6 7 8 9 10">Endonuclease that cleaves polypeptidyl-tRNAs downstream of the ribosome-associated quality control (RQC) pathway to release incompletely synthesized polypeptides for degradation (PubMed:29632312, PubMed:30244831, PubMed:31011209). The RQC pathway disassembles aberrantly stalled translation complexes to recycle or degrade the constituent parts (PubMed:29632312, PubMed:30244831, PubMed:31011209). ANKZF1 acts downstream disassembly of stalled ribosomes and specifically cleaves off the terminal 3'-CCA nucleotides universal to all tRNAs from polypeptidyl-tRNAs, releasing (1) ubiquitinated polypeptides from 60S ribosomal subunit for degradation and (2) cleaved tRNAs (PubMed:31011209). ANKZF1-cleaved tRNAs are then repaired and recycled by ELAC1 and TRNT1 (PubMed:31011209, PubMed:32075755). Also plays a role in the cellular response to hydrogen peroxide and in the maintenance of mitochondrial integrity under conditions of cellular stress (PubMed:28302725).</text>
</comment>
<comment type="subunit">
    <text evidence="5 6">Interacts (via VIM motif) with VCP.</text>
</comment>
<comment type="interaction">
    <interactant intactId="EBI-724848">
        <id>Q9H8Y5</id>
    </interactant>
    <interactant intactId="EBI-6248094">
        <id>Q9Q2G4</id>
        <label>ORF</label>
    </interactant>
    <organismsDiffer>true</organismsDiffer>
    <experiments>2</experiments>
</comment>
<comment type="subcellular location">
    <subcellularLocation>
        <location evidence="6">Cytoplasm</location>
    </subcellularLocation>
    <text evidence="6">Translocates to the mitochondria upon exposure to hydrogen peroxide.</text>
</comment>
<comment type="domain">
    <text evidence="1 3">The VLRF1 domain mediates binding to the 60S ribosomal subunit.</text>
</comment>
<comment type="similarity">
    <text evidence="3 12">Belongs to the ANKZF1/VMS1 family.</text>
</comment>
<comment type="sequence caution" evidence="12">
    <conflict type="frameshift">
        <sequence resource="EMBL-CDS" id="ABD65410"/>
    </conflict>
</comment>
<comment type="sequence caution" evidence="12">
    <conflict type="frameshift">
        <sequence resource="EMBL-CDS" id="BAA91596"/>
    </conflict>
</comment>
<reference key="1">
    <citation type="submission" date="2006-02" db="EMBL/GenBank/DDBJ databases">
        <authorList>
            <person name="Zhao Y."/>
            <person name="Li Y."/>
            <person name="Yuan W."/>
            <person name="Wu X."/>
            <person name="Liu M."/>
        </authorList>
    </citation>
    <scope>NUCLEOTIDE SEQUENCE [MRNA]</scope>
</reference>
<reference key="2">
    <citation type="journal article" date="2004" name="Nat. Genet.">
        <title>Complete sequencing and characterization of 21,243 full-length human cDNAs.</title>
        <authorList>
            <person name="Ota T."/>
            <person name="Suzuki Y."/>
            <person name="Nishikawa T."/>
            <person name="Otsuki T."/>
            <person name="Sugiyama T."/>
            <person name="Irie R."/>
            <person name="Wakamatsu A."/>
            <person name="Hayashi K."/>
            <person name="Sato H."/>
            <person name="Nagai K."/>
            <person name="Kimura K."/>
            <person name="Makita H."/>
            <person name="Sekine M."/>
            <person name="Obayashi M."/>
            <person name="Nishi T."/>
            <person name="Shibahara T."/>
            <person name="Tanaka T."/>
            <person name="Ishii S."/>
            <person name="Yamamoto J."/>
            <person name="Saito K."/>
            <person name="Kawai Y."/>
            <person name="Isono Y."/>
            <person name="Nakamura Y."/>
            <person name="Nagahari K."/>
            <person name="Murakami K."/>
            <person name="Yasuda T."/>
            <person name="Iwayanagi T."/>
            <person name="Wagatsuma M."/>
            <person name="Shiratori A."/>
            <person name="Sudo H."/>
            <person name="Hosoiri T."/>
            <person name="Kaku Y."/>
            <person name="Kodaira H."/>
            <person name="Kondo H."/>
            <person name="Sugawara M."/>
            <person name="Takahashi M."/>
            <person name="Kanda K."/>
            <person name="Yokoi T."/>
            <person name="Furuya T."/>
            <person name="Kikkawa E."/>
            <person name="Omura Y."/>
            <person name="Abe K."/>
            <person name="Kamihara K."/>
            <person name="Katsuta N."/>
            <person name="Sato K."/>
            <person name="Tanikawa M."/>
            <person name="Yamazaki M."/>
            <person name="Ninomiya K."/>
            <person name="Ishibashi T."/>
            <person name="Yamashita H."/>
            <person name="Murakawa K."/>
            <person name="Fujimori K."/>
            <person name="Tanai H."/>
            <person name="Kimata M."/>
            <person name="Watanabe M."/>
            <person name="Hiraoka S."/>
            <person name="Chiba Y."/>
            <person name="Ishida S."/>
            <person name="Ono Y."/>
            <person name="Takiguchi S."/>
            <person name="Watanabe S."/>
            <person name="Yosida M."/>
            <person name="Hotuta T."/>
            <person name="Kusano J."/>
            <person name="Kanehori K."/>
            <person name="Takahashi-Fujii A."/>
            <person name="Hara H."/>
            <person name="Tanase T.-O."/>
            <person name="Nomura Y."/>
            <person name="Togiya S."/>
            <person name="Komai F."/>
            <person name="Hara R."/>
            <person name="Takeuchi K."/>
            <person name="Arita M."/>
            <person name="Imose N."/>
            <person name="Musashino K."/>
            <person name="Yuuki H."/>
            <person name="Oshima A."/>
            <person name="Sasaki N."/>
            <person name="Aotsuka S."/>
            <person name="Yoshikawa Y."/>
            <person name="Matsunawa H."/>
            <person name="Ichihara T."/>
            <person name="Shiohata N."/>
            <person name="Sano S."/>
            <person name="Moriya S."/>
            <person name="Momiyama H."/>
            <person name="Satoh N."/>
            <person name="Takami S."/>
            <person name="Terashima Y."/>
            <person name="Suzuki O."/>
            <person name="Nakagawa S."/>
            <person name="Senoh A."/>
            <person name="Mizoguchi H."/>
            <person name="Goto Y."/>
            <person name="Shimizu F."/>
            <person name="Wakebe H."/>
            <person name="Hishigaki H."/>
            <person name="Watanabe T."/>
            <person name="Sugiyama A."/>
            <person name="Takemoto M."/>
            <person name="Kawakami B."/>
            <person name="Yamazaki M."/>
            <person name="Watanabe K."/>
            <person name="Kumagai A."/>
            <person name="Itakura S."/>
            <person name="Fukuzumi Y."/>
            <person name="Fujimori Y."/>
            <person name="Komiyama M."/>
            <person name="Tashiro H."/>
            <person name="Tanigami A."/>
            <person name="Fujiwara T."/>
            <person name="Ono T."/>
            <person name="Yamada K."/>
            <person name="Fujii Y."/>
            <person name="Ozaki K."/>
            <person name="Hirao M."/>
            <person name="Ohmori Y."/>
            <person name="Kawabata A."/>
            <person name="Hikiji T."/>
            <person name="Kobatake N."/>
            <person name="Inagaki H."/>
            <person name="Ikema Y."/>
            <person name="Okamoto S."/>
            <person name="Okitani R."/>
            <person name="Kawakami T."/>
            <person name="Noguchi S."/>
            <person name="Itoh T."/>
            <person name="Shigeta K."/>
            <person name="Senba T."/>
            <person name="Matsumura K."/>
            <person name="Nakajima Y."/>
            <person name="Mizuno T."/>
            <person name="Morinaga M."/>
            <person name="Sasaki M."/>
            <person name="Togashi T."/>
            <person name="Oyama M."/>
            <person name="Hata H."/>
            <person name="Watanabe M."/>
            <person name="Komatsu T."/>
            <person name="Mizushima-Sugano J."/>
            <person name="Satoh T."/>
            <person name="Shirai Y."/>
            <person name="Takahashi Y."/>
            <person name="Nakagawa K."/>
            <person name="Okumura K."/>
            <person name="Nagase T."/>
            <person name="Nomura N."/>
            <person name="Kikuchi H."/>
            <person name="Masuho Y."/>
            <person name="Yamashita R."/>
            <person name="Nakai K."/>
            <person name="Yada T."/>
            <person name="Nakamura Y."/>
            <person name="Ohara O."/>
            <person name="Isogai T."/>
            <person name="Sugano S."/>
        </authorList>
    </citation>
    <scope>NUCLEOTIDE SEQUENCE [LARGE SCALE MRNA]</scope>
</reference>
<reference key="3">
    <citation type="journal article" date="2004" name="Genome Res.">
        <title>The status, quality, and expansion of the NIH full-length cDNA project: the Mammalian Gene Collection (MGC).</title>
        <authorList>
            <consortium name="The MGC Project Team"/>
        </authorList>
    </citation>
    <scope>NUCLEOTIDE SEQUENCE [LARGE SCALE MRNA]</scope>
    <source>
        <tissue>Colon</tissue>
        <tissue>Eye</tissue>
    </source>
</reference>
<reference key="4">
    <citation type="journal article" date="2006" name="Cell">
        <title>Global, in vivo, and site-specific phosphorylation dynamics in signaling networks.</title>
        <authorList>
            <person name="Olsen J.V."/>
            <person name="Blagoev B."/>
            <person name="Gnad F."/>
            <person name="Macek B."/>
            <person name="Kumar C."/>
            <person name="Mortensen P."/>
            <person name="Mann M."/>
        </authorList>
    </citation>
    <scope>IDENTIFICATION BY MASS SPECTROMETRY [LARGE SCALE ANALYSIS]</scope>
    <source>
        <tissue>Cervix carcinoma</tissue>
    </source>
</reference>
<reference key="5">
    <citation type="journal article" date="2006" name="Nat. Biotechnol.">
        <title>A probability-based approach for high-throughput protein phosphorylation analysis and site localization.</title>
        <authorList>
            <person name="Beausoleil S.A."/>
            <person name="Villen J."/>
            <person name="Gerber S.A."/>
            <person name="Rush J."/>
            <person name="Gygi S.P."/>
        </authorList>
    </citation>
    <scope>IDENTIFICATION BY MASS SPECTROMETRY [LARGE SCALE ANALYSIS]</scope>
    <source>
        <tissue>Cervix carcinoma</tissue>
    </source>
</reference>
<reference key="6">
    <citation type="journal article" date="2008" name="J. Proteome Res.">
        <title>Combining protein-based IMAC, peptide-based IMAC, and MudPIT for efficient phosphoproteomic analysis.</title>
        <authorList>
            <person name="Cantin G.T."/>
            <person name="Yi W."/>
            <person name="Lu B."/>
            <person name="Park S.K."/>
            <person name="Xu T."/>
            <person name="Lee J.-D."/>
            <person name="Yates J.R. III"/>
        </authorList>
    </citation>
    <scope>IDENTIFICATION BY MASS SPECTROMETRY [LARGE SCALE ANALYSIS]</scope>
    <source>
        <tissue>Cervix carcinoma</tissue>
    </source>
</reference>
<reference key="7">
    <citation type="journal article" date="2008" name="Proc. Natl. Acad. Sci. U.S.A.">
        <title>A quantitative atlas of mitotic phosphorylation.</title>
        <authorList>
            <person name="Dephoure N."/>
            <person name="Zhou C."/>
            <person name="Villen J."/>
            <person name="Beausoleil S.A."/>
            <person name="Bakalarski C.E."/>
            <person name="Elledge S.J."/>
            <person name="Gygi S.P."/>
        </authorList>
    </citation>
    <scope>PHOSPHORYLATION [LARGE SCALE ANALYSIS] AT SER-675</scope>
    <scope>IDENTIFICATION BY MASS SPECTROMETRY [LARGE SCALE ANALYSIS]</scope>
    <source>
        <tissue>Cervix carcinoma</tissue>
    </source>
</reference>
<reference key="8">
    <citation type="journal article" date="2009" name="Anal. Chem.">
        <title>Lys-N and trypsin cover complementary parts of the phosphoproteome in a refined SCX-based approach.</title>
        <authorList>
            <person name="Gauci S."/>
            <person name="Helbig A.O."/>
            <person name="Slijper M."/>
            <person name="Krijgsveld J."/>
            <person name="Heck A.J."/>
            <person name="Mohammed S."/>
        </authorList>
    </citation>
    <scope>IDENTIFICATION BY MASS SPECTROMETRY [LARGE SCALE ANALYSIS]</scope>
</reference>
<reference key="9">
    <citation type="journal article" date="2010" name="Sci. Signal.">
        <title>Quantitative phosphoproteomics reveals widespread full phosphorylation site occupancy during mitosis.</title>
        <authorList>
            <person name="Olsen J.V."/>
            <person name="Vermeulen M."/>
            <person name="Santamaria A."/>
            <person name="Kumar C."/>
            <person name="Miller M.L."/>
            <person name="Jensen L.J."/>
            <person name="Gnad F."/>
            <person name="Cox J."/>
            <person name="Jensen T.S."/>
            <person name="Nigg E.A."/>
            <person name="Brunak S."/>
            <person name="Mann M."/>
        </authorList>
    </citation>
    <scope>PHOSPHORYLATION [LARGE SCALE ANALYSIS] AT SER-258; SER-398; SER-533 AND THR-607</scope>
    <scope>IDENTIFICATION BY MASS SPECTROMETRY [LARGE SCALE ANALYSIS]</scope>
    <source>
        <tissue>Cervix carcinoma</tissue>
    </source>
</reference>
<reference key="10">
    <citation type="journal article" date="2011" name="BMC Syst. Biol.">
        <title>Initial characterization of the human central proteome.</title>
        <authorList>
            <person name="Burkard T.R."/>
            <person name="Planyavsky M."/>
            <person name="Kaupe I."/>
            <person name="Breitwieser F.P."/>
            <person name="Buerckstuemmer T."/>
            <person name="Bennett K.L."/>
            <person name="Superti-Furga G."/>
            <person name="Colinge J."/>
        </authorList>
    </citation>
    <scope>IDENTIFICATION BY MASS SPECTROMETRY [LARGE SCALE ANALYSIS]</scope>
</reference>
<reference key="11">
    <citation type="journal article" date="2011" name="J. Biol. Chem.">
        <title>The general definition of the p97/valosin-containing protein (VCP)-interacting motif (VIM) delineates a new family of p97 cofactors.</title>
        <authorList>
            <person name="Stapf C."/>
            <person name="Cartwright E."/>
            <person name="Bycroft M."/>
            <person name="Hofmann K."/>
            <person name="Buchberger A."/>
        </authorList>
    </citation>
    <scope>INTERACTION WITH VCP</scope>
    <scope>VIM MOTI</scope>
    <scope>MUTAGENESIS OF 661-ARG-ARG-662</scope>
</reference>
<reference key="12">
    <citation type="journal article" date="2011" name="Sci. Signal.">
        <title>System-wide temporal characterization of the proteome and phosphoproteome of human embryonic stem cell differentiation.</title>
        <authorList>
            <person name="Rigbolt K.T."/>
            <person name="Prokhorova T.A."/>
            <person name="Akimov V."/>
            <person name="Henningsen J."/>
            <person name="Johansen P.T."/>
            <person name="Kratchmarova I."/>
            <person name="Kassem M."/>
            <person name="Mann M."/>
            <person name="Olsen J.V."/>
            <person name="Blagoev B."/>
        </authorList>
    </citation>
    <scope>PHOSPHORYLATION [LARGE SCALE ANALYSIS] AT SER-398</scope>
    <scope>IDENTIFICATION BY MASS SPECTROMETRY [LARGE SCALE ANALYSIS]</scope>
</reference>
<reference key="13">
    <citation type="journal article" date="2013" name="J. Proteome Res.">
        <title>Toward a comprehensive characterization of a human cancer cell phosphoproteome.</title>
        <authorList>
            <person name="Zhou H."/>
            <person name="Di Palma S."/>
            <person name="Preisinger C."/>
            <person name="Peng M."/>
            <person name="Polat A.N."/>
            <person name="Heck A.J."/>
            <person name="Mohammed S."/>
        </authorList>
    </citation>
    <scope>PHOSPHORYLATION [LARGE SCALE ANALYSIS] AT SER-361; SER-533; THR-607; SER-675 AND SER-680</scope>
    <scope>IDENTIFICATION BY MASS SPECTROMETRY [LARGE SCALE ANALYSIS]</scope>
    <source>
        <tissue>Cervix carcinoma</tissue>
        <tissue>Erythroleukemia</tissue>
    </source>
</reference>
<reference key="14">
    <citation type="journal article" date="2017" name="J. Biol. Chem.">
        <title>Ankyrin repeat and zinc-finger domain-containing 1 mutations are associated with infantile-onset inflammatory bowel disease.</title>
        <authorList>
            <person name="van Haaften-Visser D.Y."/>
            <person name="Harakalova M."/>
            <person name="Mocholi E."/>
            <person name="van Montfrans J.M."/>
            <person name="Elkadri A."/>
            <person name="Rieter E."/>
            <person name="Fiedler K."/>
            <person name="van Hasselt P.M."/>
            <person name="Triffaux E.M.M."/>
            <person name="van Haelst M.M."/>
            <person name="Nijman I.J."/>
            <person name="Kloosterman W.P."/>
            <person name="Nieuwenhuis E.E.S."/>
            <person name="Muise A.M."/>
            <person name="Cuppen E."/>
            <person name="Houwen R.H.J."/>
            <person name="Coffer P.J."/>
        </authorList>
    </citation>
    <scope>FUNCTION</scope>
    <scope>SUBCELLULAR LOCATION</scope>
    <scope>INTERACTION WITH VPC</scope>
    <scope>VARIANTS 32-VAL--GLN-87 DEL; LYS-152; GLN-585 AND PRO-638</scope>
    <scope>CHARACTERIZATION OF VARIANTS LYS-152 AND GLN-585</scope>
</reference>
<reference key="15">
    <citation type="journal article" date="2018" name="Mol. Cell">
        <title>Release of ubiquitinated and non-ubiquitinated nascent chains from stalled mammalian ribosomal complexes by ANKZF1 and Ptrh1.</title>
        <authorList>
            <person name="Kuroha K."/>
            <person name="Zinoviev A."/>
            <person name="Hellen C.U.T."/>
            <person name="Pestova T.V."/>
        </authorList>
    </citation>
    <scope>FUNCTION</scope>
    <scope>ACTIVE SITE</scope>
    <scope>MUTAGENESIS OF GLN-246</scope>
</reference>
<reference key="16">
    <citation type="journal article" date="2018" name="Nature">
        <title>Vms1 and ANKZF1 peptidyl-tRNA hydrolases release nascent chains from stalled ribosomes.</title>
        <authorList>
            <person name="Verma R."/>
            <person name="Reichermeier K.M."/>
            <person name="Burroughs A.M."/>
            <person name="Oania R.S."/>
            <person name="Reitsma J.M."/>
            <person name="Aravind L."/>
            <person name="Deshaies R.J."/>
        </authorList>
    </citation>
    <scope>FUNCTION</scope>
    <scope>ACTIVE SITE</scope>
    <scope>MUTAGENESIS OF GLN-246</scope>
</reference>
<reference key="17">
    <citation type="journal article" date="2019" name="Nat. Struct. Mol. Biol.">
        <title>Mechanism for recycling tRNAs on stalled ribosomes.</title>
        <authorList>
            <person name="Yip M.C.J."/>
            <person name="Keszei A.F.A."/>
            <person name="Feng Q."/>
            <person name="Chu V."/>
            <person name="McKenna M.J."/>
            <person name="Shao S."/>
        </authorList>
    </citation>
    <scope>FUNCTION</scope>
    <scope>CATALYTIC ACTIVITY</scope>
</reference>
<reference key="18">
    <citation type="journal article" date="2020" name="Cell Rep.">
        <title>ELAC1 repairs tRNAs cleaved during ribosome-associated quality control.</title>
        <authorList>
            <person name="Yip M.C.J."/>
            <person name="Savickas S."/>
            <person name="Gygi S.P."/>
            <person name="Shao S."/>
        </authorList>
    </citation>
    <scope>FUNCTION</scope>
</reference>